<feature type="chain" id="PRO_0000302822" description="Protein SHQ1 homolog">
    <location>
        <begin position="1"/>
        <end position="577"/>
    </location>
</feature>
<feature type="domain" description="CS" evidence="1">
    <location>
        <begin position="1"/>
        <end position="89"/>
    </location>
</feature>
<feature type="region of interest" description="Disordered" evidence="2">
    <location>
        <begin position="447"/>
        <end position="492"/>
    </location>
</feature>
<feature type="region of interest" description="Disordered" evidence="2">
    <location>
        <begin position="549"/>
        <end position="577"/>
    </location>
</feature>
<feature type="splice variant" id="VSP_056105" description="In isoform 2." evidence="9">
    <original>MLTPAFDLSQDPDFLTIAIRVPYARVSEFDVYFEGSDFKFYAKPYFLR</original>
    <variation>MNKTWSLSLKNGDCSCGGPI</variation>
    <location>
        <begin position="1"/>
        <end position="48"/>
    </location>
</feature>
<feature type="sequence variant" id="VAR_034962" description="In dbSNP:rs17855677." evidence="4">
    <original>S</original>
    <variation>I</variation>
    <location>
        <position position="140"/>
    </location>
</feature>
<feature type="sequence variant" id="VAR_087400" description="In DYT35; results in decreased H/ACA small nucleolar ribonucleoproteins production when expressed in a heterologous system; dbSNP:rs143636968." evidence="8">
    <original>D</original>
    <variation>Y</variation>
    <location>
        <position position="175"/>
    </location>
</feature>
<feature type="sequence variant" id="VAR_087401" description="In NEDDS; results in decreased H/ACA small nucleolar ribonucleoproteins production when expressed in a heterologous system; dbSNP:rs1420754646." evidence="8">
    <original>E</original>
    <variation>K</variation>
    <location>
        <position position="292"/>
    </location>
</feature>
<feature type="sequence variant" id="VAR_087402" description="In NEDDS; uncertain significance; dbSNP:rs746829352." evidence="7">
    <original>R</original>
    <variation>C</variation>
    <location>
        <position position="335"/>
    </location>
</feature>
<feature type="sequence variant" id="VAR_087403" description="In NEDDS; uncertain significance; dbSNP:rs1705349040." evidence="7">
    <original>A</original>
    <variation>V</variation>
    <location>
        <position position="426"/>
    </location>
</feature>
<feature type="sequence variant" id="VAR_034963" description="In dbSNP:rs35178407." evidence="3 5">
    <original>S</original>
    <variation>N</variation>
    <location>
        <position position="489"/>
    </location>
</feature>
<feature type="sequence conflict" description="In Ref. 1; BAB14947." evidence="10" ref="1">
    <original>E</original>
    <variation>Q</variation>
    <location>
        <position position="128"/>
    </location>
</feature>
<feature type="sequence conflict" description="In Ref. 1; BAA91669." evidence="10" ref="1">
    <original>V</original>
    <variation>A</variation>
    <location>
        <position position="505"/>
    </location>
</feature>
<feature type="sequence conflict" description="In Ref. 1; BAB14947." evidence="10" ref="1">
    <original>D</original>
    <variation>G</variation>
    <location>
        <position position="506"/>
    </location>
</feature>
<feature type="strand" evidence="12">
    <location>
        <begin position="6"/>
        <end position="10"/>
    </location>
</feature>
<feature type="strand" evidence="12">
    <location>
        <begin position="12"/>
        <end position="20"/>
    </location>
</feature>
<feature type="strand" evidence="11">
    <location>
        <begin position="26"/>
        <end position="28"/>
    </location>
</feature>
<feature type="strand" evidence="12">
    <location>
        <begin position="30"/>
        <end position="42"/>
    </location>
</feature>
<feature type="strand" evidence="12">
    <location>
        <begin position="45"/>
        <end position="55"/>
    </location>
</feature>
<feature type="strand" evidence="12">
    <location>
        <begin position="62"/>
        <end position="66"/>
    </location>
</feature>
<feature type="turn" evidence="12">
    <location>
        <begin position="67"/>
        <end position="70"/>
    </location>
</feature>
<feature type="strand" evidence="12">
    <location>
        <begin position="71"/>
        <end position="80"/>
    </location>
</feature>
<feature type="helix" evidence="12">
    <location>
        <begin position="88"/>
        <end position="90"/>
    </location>
</feature>
<protein>
    <recommendedName>
        <fullName>Protein SHQ1 homolog</fullName>
    </recommendedName>
</protein>
<gene>
    <name type="primary">SHQ1</name>
</gene>
<keyword id="KW-0002">3D-structure</keyword>
<keyword id="KW-0025">Alternative splicing</keyword>
<keyword id="KW-0963">Cytoplasm</keyword>
<keyword id="KW-0225">Disease variant</keyword>
<keyword id="KW-1023">Dystonia</keyword>
<keyword id="KW-0991">Intellectual disability</keyword>
<keyword id="KW-0539">Nucleus</keyword>
<keyword id="KW-1267">Proteomics identification</keyword>
<keyword id="KW-1185">Reference proteome</keyword>
<sequence length="577" mass="65125">MLTPAFDLSQDPDFLTIAIRVPYARVSEFDVYFEGSDFKFYAKPYFLRLTLPGRIVENGSEQGSYDADKGIFTIRLPKETPGQHFEGLNMLTALLAPRKSRTAKPLVEEIGASEIPEEVVDDEEFDWEIEQTPCEEVSESALNPQCHYGFGNLRSGVLQRLQDELSDVIDIKDPDFTPAAERRQKRLAAELAKFDPDHYLADFFEDEAIEQILKYNPWWTDKYSKMMAFLEKSQEQENHATLVSFSEEEKYQLRKFVNKSYLLDKRACRQVCYSLIDILLAYCYETRVTEGEKNVESAWNIRKLSPTLCWFETWTNVHDIMVSFGRRVLCYPLYRHFKLVMKAYRDTIKILQLGKSAVLKCLLDIHKIFQENDPAYILNDLYISDYCVWIQKVKSKKLAALAEALKEVSLTKAQLGLELEELEAAALLVQEEETALKAAHSVSGQQTLCSSSEASDSEDSDSSVSSGNEDSGSDSEQDELKDSPSETVSSLQGPFLEESSAFLIVDGGVRRNTAIQESDASQGKPLASSWPLGVSGPLIEELGEQLKTTVQVSEPKGTTAVNRSNIQERDGCQTPNN</sequence>
<organism>
    <name type="scientific">Homo sapiens</name>
    <name type="common">Human</name>
    <dbReference type="NCBI Taxonomy" id="9606"/>
    <lineage>
        <taxon>Eukaryota</taxon>
        <taxon>Metazoa</taxon>
        <taxon>Chordata</taxon>
        <taxon>Craniata</taxon>
        <taxon>Vertebrata</taxon>
        <taxon>Euteleostomi</taxon>
        <taxon>Mammalia</taxon>
        <taxon>Eutheria</taxon>
        <taxon>Euarchontoglires</taxon>
        <taxon>Primates</taxon>
        <taxon>Haplorrhini</taxon>
        <taxon>Catarrhini</taxon>
        <taxon>Hominidae</taxon>
        <taxon>Homo</taxon>
    </lineage>
</organism>
<proteinExistence type="evidence at protein level"/>
<evidence type="ECO:0000255" key="1">
    <source>
        <dbReference type="PROSITE-ProRule" id="PRU00547"/>
    </source>
</evidence>
<evidence type="ECO:0000256" key="2">
    <source>
        <dbReference type="SAM" id="MobiDB-lite"/>
    </source>
</evidence>
<evidence type="ECO:0000269" key="3">
    <source>
    </source>
</evidence>
<evidence type="ECO:0000269" key="4">
    <source>
    </source>
</evidence>
<evidence type="ECO:0000269" key="5">
    <source>
    </source>
</evidence>
<evidence type="ECO:0000269" key="6">
    <source>
    </source>
</evidence>
<evidence type="ECO:0000269" key="7">
    <source>
    </source>
</evidence>
<evidence type="ECO:0000269" key="8">
    <source>
    </source>
</evidence>
<evidence type="ECO:0000303" key="9">
    <source>
    </source>
</evidence>
<evidence type="ECO:0000305" key="10"/>
<evidence type="ECO:0007829" key="11">
    <source>
        <dbReference type="PDB" id="2MNW"/>
    </source>
</evidence>
<evidence type="ECO:0007829" key="12">
    <source>
        <dbReference type="PDB" id="4PBD"/>
    </source>
</evidence>
<reference key="1">
    <citation type="journal article" date="2004" name="Nat. Genet.">
        <title>Complete sequencing and characterization of 21,243 full-length human cDNAs.</title>
        <authorList>
            <person name="Ota T."/>
            <person name="Suzuki Y."/>
            <person name="Nishikawa T."/>
            <person name="Otsuki T."/>
            <person name="Sugiyama T."/>
            <person name="Irie R."/>
            <person name="Wakamatsu A."/>
            <person name="Hayashi K."/>
            <person name="Sato H."/>
            <person name="Nagai K."/>
            <person name="Kimura K."/>
            <person name="Makita H."/>
            <person name="Sekine M."/>
            <person name="Obayashi M."/>
            <person name="Nishi T."/>
            <person name="Shibahara T."/>
            <person name="Tanaka T."/>
            <person name="Ishii S."/>
            <person name="Yamamoto J."/>
            <person name="Saito K."/>
            <person name="Kawai Y."/>
            <person name="Isono Y."/>
            <person name="Nakamura Y."/>
            <person name="Nagahari K."/>
            <person name="Murakami K."/>
            <person name="Yasuda T."/>
            <person name="Iwayanagi T."/>
            <person name="Wagatsuma M."/>
            <person name="Shiratori A."/>
            <person name="Sudo H."/>
            <person name="Hosoiri T."/>
            <person name="Kaku Y."/>
            <person name="Kodaira H."/>
            <person name="Kondo H."/>
            <person name="Sugawara M."/>
            <person name="Takahashi M."/>
            <person name="Kanda K."/>
            <person name="Yokoi T."/>
            <person name="Furuya T."/>
            <person name="Kikkawa E."/>
            <person name="Omura Y."/>
            <person name="Abe K."/>
            <person name="Kamihara K."/>
            <person name="Katsuta N."/>
            <person name="Sato K."/>
            <person name="Tanikawa M."/>
            <person name="Yamazaki M."/>
            <person name="Ninomiya K."/>
            <person name="Ishibashi T."/>
            <person name="Yamashita H."/>
            <person name="Murakawa K."/>
            <person name="Fujimori K."/>
            <person name="Tanai H."/>
            <person name="Kimata M."/>
            <person name="Watanabe M."/>
            <person name="Hiraoka S."/>
            <person name="Chiba Y."/>
            <person name="Ishida S."/>
            <person name="Ono Y."/>
            <person name="Takiguchi S."/>
            <person name="Watanabe S."/>
            <person name="Yosida M."/>
            <person name="Hotuta T."/>
            <person name="Kusano J."/>
            <person name="Kanehori K."/>
            <person name="Takahashi-Fujii A."/>
            <person name="Hara H."/>
            <person name="Tanase T.-O."/>
            <person name="Nomura Y."/>
            <person name="Togiya S."/>
            <person name="Komai F."/>
            <person name="Hara R."/>
            <person name="Takeuchi K."/>
            <person name="Arita M."/>
            <person name="Imose N."/>
            <person name="Musashino K."/>
            <person name="Yuuki H."/>
            <person name="Oshima A."/>
            <person name="Sasaki N."/>
            <person name="Aotsuka S."/>
            <person name="Yoshikawa Y."/>
            <person name="Matsunawa H."/>
            <person name="Ichihara T."/>
            <person name="Shiohata N."/>
            <person name="Sano S."/>
            <person name="Moriya S."/>
            <person name="Momiyama H."/>
            <person name="Satoh N."/>
            <person name="Takami S."/>
            <person name="Terashima Y."/>
            <person name="Suzuki O."/>
            <person name="Nakagawa S."/>
            <person name="Senoh A."/>
            <person name="Mizoguchi H."/>
            <person name="Goto Y."/>
            <person name="Shimizu F."/>
            <person name="Wakebe H."/>
            <person name="Hishigaki H."/>
            <person name="Watanabe T."/>
            <person name="Sugiyama A."/>
            <person name="Takemoto M."/>
            <person name="Kawakami B."/>
            <person name="Yamazaki M."/>
            <person name="Watanabe K."/>
            <person name="Kumagai A."/>
            <person name="Itakura S."/>
            <person name="Fukuzumi Y."/>
            <person name="Fujimori Y."/>
            <person name="Komiyama M."/>
            <person name="Tashiro H."/>
            <person name="Tanigami A."/>
            <person name="Fujiwara T."/>
            <person name="Ono T."/>
            <person name="Yamada K."/>
            <person name="Fujii Y."/>
            <person name="Ozaki K."/>
            <person name="Hirao M."/>
            <person name="Ohmori Y."/>
            <person name="Kawabata A."/>
            <person name="Hikiji T."/>
            <person name="Kobatake N."/>
            <person name="Inagaki H."/>
            <person name="Ikema Y."/>
            <person name="Okamoto S."/>
            <person name="Okitani R."/>
            <person name="Kawakami T."/>
            <person name="Noguchi S."/>
            <person name="Itoh T."/>
            <person name="Shigeta K."/>
            <person name="Senba T."/>
            <person name="Matsumura K."/>
            <person name="Nakajima Y."/>
            <person name="Mizuno T."/>
            <person name="Morinaga M."/>
            <person name="Sasaki M."/>
            <person name="Togashi T."/>
            <person name="Oyama M."/>
            <person name="Hata H."/>
            <person name="Watanabe M."/>
            <person name="Komatsu T."/>
            <person name="Mizushima-Sugano J."/>
            <person name="Satoh T."/>
            <person name="Shirai Y."/>
            <person name="Takahashi Y."/>
            <person name="Nakagawa K."/>
            <person name="Okumura K."/>
            <person name="Nagase T."/>
            <person name="Nomura N."/>
            <person name="Kikuchi H."/>
            <person name="Masuho Y."/>
            <person name="Yamashita R."/>
            <person name="Nakai K."/>
            <person name="Yada T."/>
            <person name="Nakamura Y."/>
            <person name="Ohara O."/>
            <person name="Isogai T."/>
            <person name="Sugano S."/>
        </authorList>
    </citation>
    <scope>NUCLEOTIDE SEQUENCE [LARGE SCALE MRNA] (ISOFORMS 1 AND 2)</scope>
    <scope>VARIANT ASN-489</scope>
    <source>
        <tissue>Teratocarcinoma</tissue>
        <tissue>Tongue</tissue>
    </source>
</reference>
<reference key="2">
    <citation type="journal article" date="2006" name="Nature">
        <title>The DNA sequence, annotation and analysis of human chromosome 3.</title>
        <authorList>
            <person name="Muzny D.M."/>
            <person name="Scherer S.E."/>
            <person name="Kaul R."/>
            <person name="Wang J."/>
            <person name="Yu J."/>
            <person name="Sudbrak R."/>
            <person name="Buhay C.J."/>
            <person name="Chen R."/>
            <person name="Cree A."/>
            <person name="Ding Y."/>
            <person name="Dugan-Rocha S."/>
            <person name="Gill R."/>
            <person name="Gunaratne P."/>
            <person name="Harris R.A."/>
            <person name="Hawes A.C."/>
            <person name="Hernandez J."/>
            <person name="Hodgson A.V."/>
            <person name="Hume J."/>
            <person name="Jackson A."/>
            <person name="Khan Z.M."/>
            <person name="Kovar-Smith C."/>
            <person name="Lewis L.R."/>
            <person name="Lozado R.J."/>
            <person name="Metzker M.L."/>
            <person name="Milosavljevic A."/>
            <person name="Miner G.R."/>
            <person name="Morgan M.B."/>
            <person name="Nazareth L.V."/>
            <person name="Scott G."/>
            <person name="Sodergren E."/>
            <person name="Song X.-Z."/>
            <person name="Steffen D."/>
            <person name="Wei S."/>
            <person name="Wheeler D.A."/>
            <person name="Wright M.W."/>
            <person name="Worley K.C."/>
            <person name="Yuan Y."/>
            <person name="Zhang Z."/>
            <person name="Adams C.Q."/>
            <person name="Ansari-Lari M.A."/>
            <person name="Ayele M."/>
            <person name="Brown M.J."/>
            <person name="Chen G."/>
            <person name="Chen Z."/>
            <person name="Clendenning J."/>
            <person name="Clerc-Blankenburg K.P."/>
            <person name="Chen R."/>
            <person name="Chen Z."/>
            <person name="Davis C."/>
            <person name="Delgado O."/>
            <person name="Dinh H.H."/>
            <person name="Dong W."/>
            <person name="Draper H."/>
            <person name="Ernst S."/>
            <person name="Fu G."/>
            <person name="Gonzalez-Garay M.L."/>
            <person name="Garcia D.K."/>
            <person name="Gillett W."/>
            <person name="Gu J."/>
            <person name="Hao B."/>
            <person name="Haugen E."/>
            <person name="Havlak P."/>
            <person name="He X."/>
            <person name="Hennig S."/>
            <person name="Hu S."/>
            <person name="Huang W."/>
            <person name="Jackson L.R."/>
            <person name="Jacob L.S."/>
            <person name="Kelly S.H."/>
            <person name="Kube M."/>
            <person name="Levy R."/>
            <person name="Li Z."/>
            <person name="Liu B."/>
            <person name="Liu J."/>
            <person name="Liu W."/>
            <person name="Lu J."/>
            <person name="Maheshwari M."/>
            <person name="Nguyen B.-V."/>
            <person name="Okwuonu G.O."/>
            <person name="Palmeiri A."/>
            <person name="Pasternak S."/>
            <person name="Perez L.M."/>
            <person name="Phelps K.A."/>
            <person name="Plopper F.J."/>
            <person name="Qiang B."/>
            <person name="Raymond C."/>
            <person name="Rodriguez R."/>
            <person name="Saenphimmachak C."/>
            <person name="Santibanez J."/>
            <person name="Shen H."/>
            <person name="Shen Y."/>
            <person name="Subramanian S."/>
            <person name="Tabor P.E."/>
            <person name="Verduzco D."/>
            <person name="Waldron L."/>
            <person name="Wang J."/>
            <person name="Wang J."/>
            <person name="Wang Q."/>
            <person name="Williams G.A."/>
            <person name="Wong G.K.-S."/>
            <person name="Yao Z."/>
            <person name="Zhang J."/>
            <person name="Zhang X."/>
            <person name="Zhao G."/>
            <person name="Zhou J."/>
            <person name="Zhou Y."/>
            <person name="Nelson D."/>
            <person name="Lehrach H."/>
            <person name="Reinhardt R."/>
            <person name="Naylor S.L."/>
            <person name="Yang H."/>
            <person name="Olson M."/>
            <person name="Weinstock G."/>
            <person name="Gibbs R.A."/>
        </authorList>
    </citation>
    <scope>NUCLEOTIDE SEQUENCE [LARGE SCALE GENOMIC DNA]</scope>
</reference>
<reference key="3">
    <citation type="journal article" date="2004" name="Genome Res.">
        <title>The status, quality, and expansion of the NIH full-length cDNA project: the Mammalian Gene Collection (MGC).</title>
        <authorList>
            <consortium name="The MGC Project Team"/>
        </authorList>
    </citation>
    <scope>NUCLEOTIDE SEQUENCE [LARGE SCALE MRNA] (ISOFORM 1)</scope>
    <scope>VARIANT ILE-140</scope>
    <source>
        <tissue>Skin</tissue>
    </source>
</reference>
<reference key="4">
    <citation type="journal article" date="2007" name="BMC Genomics">
        <title>The full-ORF clone resource of the German cDNA consortium.</title>
        <authorList>
            <person name="Bechtel S."/>
            <person name="Rosenfelder H."/>
            <person name="Duda A."/>
            <person name="Schmidt C.P."/>
            <person name="Ernst U."/>
            <person name="Wellenreuther R."/>
            <person name="Mehrle A."/>
            <person name="Schuster C."/>
            <person name="Bahr A."/>
            <person name="Bloecker H."/>
            <person name="Heubner D."/>
            <person name="Hoerlein A."/>
            <person name="Michel G."/>
            <person name="Wedler H."/>
            <person name="Koehrer K."/>
            <person name="Ottenwaelder B."/>
            <person name="Poustka A."/>
            <person name="Wiemann S."/>
            <person name="Schupp I."/>
        </authorList>
    </citation>
    <scope>NUCLEOTIDE SEQUENCE [LARGE SCALE MRNA] OF 358-577 (ISOFORM 1)</scope>
    <scope>VARIANT ASN-489</scope>
    <source>
        <tissue>Small intestine</tissue>
    </source>
</reference>
<reference key="5">
    <citation type="journal article" date="2009" name="RNA">
        <title>SHQ1 is required prior to NAF1 for assembly of H/ACA small nucleolar and telomerase RNPs.</title>
        <authorList>
            <person name="Grozdanov P.N."/>
            <person name="Roy S."/>
            <person name="Kittur N."/>
            <person name="Meier U.T."/>
        </authorList>
    </citation>
    <scope>FUNCTION</scope>
    <scope>INTERACTION WITH DKC1</scope>
    <scope>SUBCELLULAR LOCATION</scope>
</reference>
<reference key="6">
    <citation type="journal article" date="2017" name="Mol. Genet. Genomic Med.">
        <title>Inherited SHQ1 mutations impair interaction with NAP57/dyskerin, a major target in dyskeratosis congenita.</title>
        <authorList>
            <person name="Bizarro J."/>
            <person name="Meier U.T."/>
        </authorList>
    </citation>
    <scope>VARIANTS NEDDS CYS-335 AND VAL-426</scope>
    <scope>INVOLVEMENT IN NEDDS</scope>
</reference>
<reference key="7">
    <citation type="journal article" date="2022" name="Hum. Mol. Genet.">
        <title>Compound heterozygous variants in SHQ1 are associated with a spectrum of neurological features, including early-onset dystonia.</title>
        <authorList>
            <consortium name="Care4Rare Canada Consortium"/>
            <person name="Sleiman S."/>
            <person name="Marshall A.E."/>
            <person name="Dong X."/>
            <person name="Mhanni A."/>
            <person name="Alidou-D'Anjou I."/>
            <person name="Frosk P."/>
            <person name="Marin S.E."/>
            <person name="Stark Z."/>
            <person name="Del Bigio M.R."/>
            <person name="McBride A."/>
            <person name="Sadedin S."/>
            <person name="Gallacher L."/>
            <person name="Christodoulou J."/>
            <person name="Boycott K.M."/>
            <person name="Dragon F."/>
            <person name="Kernohan K.D."/>
        </authorList>
    </citation>
    <scope>VARIANT DYT35 TYR-175</scope>
    <scope>INVOLVEMENT IN DYT35</scope>
    <scope>CHARACTERIZATION OF VARIANT DYT35 TYR-175</scope>
    <scope>VARIANT NEDDS LYS-292</scope>
    <scope>INVOLVEMENT IN NEDDS</scope>
    <scope>CHARACTERIZATION OF VARIANT NEDDS LYS-292</scope>
    <scope>FUNCTION</scope>
</reference>
<name>SHQ1_HUMAN</name>
<dbReference type="EMBL" id="AK001401">
    <property type="protein sequence ID" value="BAA91669.1"/>
    <property type="status" value="ALT_FRAME"/>
    <property type="molecule type" value="mRNA"/>
</dbReference>
<dbReference type="EMBL" id="AK024656">
    <property type="protein sequence ID" value="BAB14947.1"/>
    <property type="status" value="ALT_INIT"/>
    <property type="molecule type" value="mRNA"/>
</dbReference>
<dbReference type="EMBL" id="AK296789">
    <property type="protein sequence ID" value="BAG59367.1"/>
    <property type="molecule type" value="mRNA"/>
</dbReference>
<dbReference type="EMBL" id="AC114876">
    <property type="status" value="NOT_ANNOTATED_CDS"/>
    <property type="molecule type" value="Genomic_DNA"/>
</dbReference>
<dbReference type="EMBL" id="AC134050">
    <property type="status" value="NOT_ANNOTATED_CDS"/>
    <property type="molecule type" value="Genomic_DNA"/>
</dbReference>
<dbReference type="EMBL" id="BC017204">
    <property type="protein sequence ID" value="AAH17204.1"/>
    <property type="molecule type" value="mRNA"/>
</dbReference>
<dbReference type="EMBL" id="BC017274">
    <property type="protein sequence ID" value="AAH17274.1"/>
    <property type="molecule type" value="mRNA"/>
</dbReference>
<dbReference type="EMBL" id="BC025270">
    <property type="protein sequence ID" value="AAH25270.1"/>
    <property type="molecule type" value="mRNA"/>
</dbReference>
<dbReference type="EMBL" id="BC032671">
    <property type="protein sequence ID" value="AAH32671.1"/>
    <property type="molecule type" value="mRNA"/>
</dbReference>
<dbReference type="EMBL" id="BC039830">
    <property type="protein sequence ID" value="AAH39830.1"/>
    <property type="molecule type" value="mRNA"/>
</dbReference>
<dbReference type="EMBL" id="BC047879">
    <property type="protein sequence ID" value="AAH47879.1"/>
    <property type="molecule type" value="mRNA"/>
</dbReference>
<dbReference type="EMBL" id="BX641074">
    <property type="protein sequence ID" value="CAE46037.1"/>
    <property type="molecule type" value="mRNA"/>
</dbReference>
<dbReference type="CCDS" id="CCDS33788.1">
    <molecule id="Q6PI26-1"/>
</dbReference>
<dbReference type="RefSeq" id="NP_060600.2">
    <molecule id="Q6PI26-1"/>
    <property type="nucleotide sequence ID" value="NM_018130.3"/>
</dbReference>
<dbReference type="PDB" id="2MNW">
    <property type="method" value="NMR"/>
    <property type="chains" value="A=1-96"/>
</dbReference>
<dbReference type="PDB" id="4PBD">
    <property type="method" value="X-ray"/>
    <property type="resolution" value="1.68 A"/>
    <property type="chains" value="A=1-96"/>
</dbReference>
<dbReference type="PDB" id="4PCK">
    <property type="method" value="X-ray"/>
    <property type="resolution" value="2.40 A"/>
    <property type="chains" value="A/B=1-96"/>
</dbReference>
<dbReference type="PDBsum" id="2MNW"/>
<dbReference type="PDBsum" id="4PBD"/>
<dbReference type="PDBsum" id="4PCK"/>
<dbReference type="BMRB" id="Q6PI26"/>
<dbReference type="SMR" id="Q6PI26"/>
<dbReference type="BioGRID" id="120464">
    <property type="interactions" value="31"/>
</dbReference>
<dbReference type="FunCoup" id="Q6PI26">
    <property type="interactions" value="3083"/>
</dbReference>
<dbReference type="IntAct" id="Q6PI26">
    <property type="interactions" value="19"/>
</dbReference>
<dbReference type="STRING" id="9606.ENSP00000315182"/>
<dbReference type="iPTMnet" id="Q6PI26"/>
<dbReference type="PhosphoSitePlus" id="Q6PI26"/>
<dbReference type="BioMuta" id="SHQ1"/>
<dbReference type="DMDM" id="158563966"/>
<dbReference type="jPOST" id="Q6PI26"/>
<dbReference type="MassIVE" id="Q6PI26"/>
<dbReference type="PaxDb" id="9606-ENSP00000315182"/>
<dbReference type="PeptideAtlas" id="Q6PI26"/>
<dbReference type="ProteomicsDB" id="4500"/>
<dbReference type="ProteomicsDB" id="67135">
    <molecule id="Q6PI26-1"/>
</dbReference>
<dbReference type="Pumba" id="Q6PI26"/>
<dbReference type="Antibodypedia" id="51842">
    <property type="antibodies" value="92 antibodies from 21 providers"/>
</dbReference>
<dbReference type="DNASU" id="55164"/>
<dbReference type="Ensembl" id="ENST00000325599.13">
    <molecule id="Q6PI26-1"/>
    <property type="protein sequence ID" value="ENSP00000315182.8"/>
    <property type="gene ID" value="ENSG00000144736.14"/>
</dbReference>
<dbReference type="Ensembl" id="ENST00000463369.5">
    <molecule id="Q6PI26-2"/>
    <property type="protein sequence ID" value="ENSP00000417452.1"/>
    <property type="gene ID" value="ENSG00000144736.14"/>
</dbReference>
<dbReference type="GeneID" id="55164"/>
<dbReference type="KEGG" id="hsa:55164"/>
<dbReference type="MANE-Select" id="ENST00000325599.13">
    <property type="protein sequence ID" value="ENSP00000315182.8"/>
    <property type="RefSeq nucleotide sequence ID" value="NM_018130.3"/>
    <property type="RefSeq protein sequence ID" value="NP_060600.2"/>
</dbReference>
<dbReference type="UCSC" id="uc003dpf.4">
    <molecule id="Q6PI26-1"/>
    <property type="organism name" value="human"/>
</dbReference>
<dbReference type="AGR" id="HGNC:25543"/>
<dbReference type="CTD" id="55164"/>
<dbReference type="DisGeNET" id="55164"/>
<dbReference type="GeneCards" id="SHQ1"/>
<dbReference type="HGNC" id="HGNC:25543">
    <property type="gene designation" value="SHQ1"/>
</dbReference>
<dbReference type="HPA" id="ENSG00000144736">
    <property type="expression patterns" value="Low tissue specificity"/>
</dbReference>
<dbReference type="MalaCards" id="SHQ1"/>
<dbReference type="MIM" id="613663">
    <property type="type" value="gene"/>
</dbReference>
<dbReference type="MIM" id="619921">
    <property type="type" value="phenotype"/>
</dbReference>
<dbReference type="MIM" id="619922">
    <property type="type" value="phenotype"/>
</dbReference>
<dbReference type="neXtProt" id="NX_Q6PI26"/>
<dbReference type="OpenTargets" id="ENSG00000144736"/>
<dbReference type="Orphanet" id="256">
    <property type="disease" value="Early-onset generalized limb-onset dystonia"/>
</dbReference>
<dbReference type="PharmGKB" id="PA142670921"/>
<dbReference type="VEuPathDB" id="HostDB:ENSG00000144736"/>
<dbReference type="eggNOG" id="KOG3247">
    <property type="taxonomic scope" value="Eukaryota"/>
</dbReference>
<dbReference type="GeneTree" id="ENSGT00390000007605"/>
<dbReference type="HOGENOM" id="CLU_030217_0_0_1"/>
<dbReference type="InParanoid" id="Q6PI26"/>
<dbReference type="OMA" id="HNIESAW"/>
<dbReference type="OrthoDB" id="73639at2759"/>
<dbReference type="PAN-GO" id="Q6PI26">
    <property type="GO annotations" value="4 GO annotations based on evolutionary models"/>
</dbReference>
<dbReference type="PhylomeDB" id="Q6PI26"/>
<dbReference type="TreeFam" id="TF106118"/>
<dbReference type="PathwayCommons" id="Q6PI26"/>
<dbReference type="Reactome" id="R-HSA-171319">
    <property type="pathway name" value="Telomere Extension By Telomerase"/>
</dbReference>
<dbReference type="SignaLink" id="Q6PI26"/>
<dbReference type="BioGRID-ORCS" id="55164">
    <property type="hits" value="619 hits in 1167 CRISPR screens"/>
</dbReference>
<dbReference type="ChiTaRS" id="SHQ1">
    <property type="organism name" value="human"/>
</dbReference>
<dbReference type="EvolutionaryTrace" id="Q6PI26"/>
<dbReference type="GenomeRNAi" id="55164"/>
<dbReference type="Pharos" id="Q6PI26">
    <property type="development level" value="Tbio"/>
</dbReference>
<dbReference type="PRO" id="PR:Q6PI26"/>
<dbReference type="Proteomes" id="UP000005640">
    <property type="component" value="Chromosome 3"/>
</dbReference>
<dbReference type="RNAct" id="Q6PI26">
    <property type="molecule type" value="protein"/>
</dbReference>
<dbReference type="Bgee" id="ENSG00000144736">
    <property type="expression patterns" value="Expressed in sperm and 202 other cell types or tissues"/>
</dbReference>
<dbReference type="ExpressionAtlas" id="Q6PI26">
    <property type="expression patterns" value="baseline and differential"/>
</dbReference>
<dbReference type="GO" id="GO:0005737">
    <property type="term" value="C:cytoplasm"/>
    <property type="evidence" value="ECO:0000314"/>
    <property type="project" value="UniProtKB"/>
</dbReference>
<dbReference type="GO" id="GO:0005829">
    <property type="term" value="C:cytosol"/>
    <property type="evidence" value="ECO:0000314"/>
    <property type="project" value="HPA"/>
</dbReference>
<dbReference type="GO" id="GO:0005654">
    <property type="term" value="C:nucleoplasm"/>
    <property type="evidence" value="ECO:0000314"/>
    <property type="project" value="HPA"/>
</dbReference>
<dbReference type="GO" id="GO:0051082">
    <property type="term" value="F:unfolded protein binding"/>
    <property type="evidence" value="ECO:0000318"/>
    <property type="project" value="GO_Central"/>
</dbReference>
<dbReference type="GO" id="GO:0000493">
    <property type="term" value="P:box H/ACA snoRNP assembly"/>
    <property type="evidence" value="ECO:0000318"/>
    <property type="project" value="GO_Central"/>
</dbReference>
<dbReference type="GO" id="GO:1904263">
    <property type="term" value="P:positive regulation of TORC1 signaling"/>
    <property type="evidence" value="ECO:0007669"/>
    <property type="project" value="Ensembl"/>
</dbReference>
<dbReference type="GO" id="GO:0022618">
    <property type="term" value="P:protein-RNA complex assembly"/>
    <property type="evidence" value="ECO:0000314"/>
    <property type="project" value="UniProtKB"/>
</dbReference>
<dbReference type="GO" id="GO:0060765">
    <property type="term" value="P:regulation of androgen receptor signaling pathway"/>
    <property type="evidence" value="ECO:0007669"/>
    <property type="project" value="Ensembl"/>
</dbReference>
<dbReference type="GO" id="GO:0090671">
    <property type="term" value="P:telomerase RNA localization to Cajal body"/>
    <property type="evidence" value="ECO:0007001"/>
    <property type="project" value="BHF-UCL"/>
</dbReference>
<dbReference type="FunFam" id="2.60.40.790:FF:000022">
    <property type="entry name" value="Protein SHQ1 homolog"/>
    <property type="match status" value="1"/>
</dbReference>
<dbReference type="Gene3D" id="2.60.40.790">
    <property type="match status" value="1"/>
</dbReference>
<dbReference type="InterPro" id="IPR007052">
    <property type="entry name" value="CS_dom"/>
</dbReference>
<dbReference type="InterPro" id="IPR008978">
    <property type="entry name" value="HSP20-like_chaperone"/>
</dbReference>
<dbReference type="InterPro" id="IPR039742">
    <property type="entry name" value="Shq1"/>
</dbReference>
<dbReference type="InterPro" id="IPR048696">
    <property type="entry name" value="SHQ1-like_CS"/>
</dbReference>
<dbReference type="InterPro" id="IPR007009">
    <property type="entry name" value="Shq1_C"/>
</dbReference>
<dbReference type="PANTHER" id="PTHR12967">
    <property type="entry name" value="PROTEIN SHQ1 HOMOLOG"/>
    <property type="match status" value="1"/>
</dbReference>
<dbReference type="PANTHER" id="PTHR12967:SF0">
    <property type="entry name" value="PROTEIN SHQ1 HOMOLOG"/>
    <property type="match status" value="1"/>
</dbReference>
<dbReference type="Pfam" id="PF04925">
    <property type="entry name" value="SHQ1"/>
    <property type="match status" value="1"/>
</dbReference>
<dbReference type="Pfam" id="PF21413">
    <property type="entry name" value="SHQ1-like_CS"/>
    <property type="match status" value="1"/>
</dbReference>
<dbReference type="SUPFAM" id="SSF49764">
    <property type="entry name" value="HSP20-like chaperones"/>
    <property type="match status" value="1"/>
</dbReference>
<dbReference type="PROSITE" id="PS51203">
    <property type="entry name" value="CS"/>
    <property type="match status" value="1"/>
</dbReference>
<accession>Q6PI26</accession>
<accession>B4DL05</accession>
<accession>Q6MZJ4</accession>
<accession>Q7Z748</accession>
<accession>Q9H7E5</accession>
<accession>Q9NVS8</accession>
<comment type="function">
    <text evidence="6 8">Required for the quantitative accumulation of H/ACA ribonucleoproteins (RNPs), including telomerase, probably through the stabilization of DKC1, from the time of its synthesis until its association with NOP10, NHP2, and NAF1 at the nascent H/ACA RNA.</text>
</comment>
<comment type="subunit">
    <text evidence="6">Directly interacts with DKC1 alone, but not in the context of the core trimer composed of DKC1, NOP10 and NHP2, nor in the presence of NAF1. Does not interact with NAF1.</text>
</comment>
<comment type="interaction">
    <interactant intactId="EBI-2515568">
        <id>Q6PI26</id>
    </interactant>
    <interactant intactId="EBI-713091">
        <id>O60832</id>
        <label>DKC1</label>
    </interactant>
    <organismsDiffer>false</organismsDiffer>
    <experiments>5</experiments>
</comment>
<comment type="interaction">
    <interactant intactId="EBI-2515568">
        <id>Q6PI26</id>
    </interactant>
    <interactant intactId="EBI-10172181">
        <id>Q53SE7</id>
        <label>FLJ13057</label>
    </interactant>
    <organismsDiffer>false</organismsDiffer>
    <experiments>3</experiments>
</comment>
<comment type="interaction">
    <interactant intactId="EBI-2515568">
        <id>Q6PI26</id>
    </interactant>
    <interactant intactId="EBI-2548508">
        <id>Q96IK5</id>
        <label>GMCL1</label>
    </interactant>
    <organismsDiffer>false</organismsDiffer>
    <experiments>3</experiments>
</comment>
<comment type="interaction">
    <interactant intactId="EBI-2515568">
        <id>Q6PI26</id>
    </interactant>
    <interactant intactId="EBI-745707">
        <id>Q8NEA9</id>
        <label>GMCL2</label>
    </interactant>
    <organismsDiffer>false</organismsDiffer>
    <experiments>3</experiments>
</comment>
<comment type="subcellular location">
    <subcellularLocation>
        <location evidence="6">Cytoplasm</location>
        <location evidence="6">Cytosol</location>
    </subcellularLocation>
    <subcellularLocation>
        <location evidence="6">Nucleus</location>
        <location evidence="6">Nucleoplasm</location>
    </subcellularLocation>
    <text>May at least partially shuttle between cytosol and nucleoplasm. In the nucleoplasm, exhibits a granular pattern, but is excluded from nucleoli and Cajal bodies. Absent from most H/ACA-box RNA transcription sites.</text>
</comment>
<comment type="alternative products">
    <event type="alternative splicing"/>
    <isoform>
        <id>Q6PI26-1</id>
        <name>1</name>
        <sequence type="displayed"/>
    </isoform>
    <isoform>
        <id>Q6PI26-2</id>
        <name>2</name>
        <sequence type="described" ref="VSP_056105"/>
    </isoform>
</comment>
<comment type="disease" evidence="8">
    <disease id="DI-06446">
        <name>Dystonia 35, childhood-onset</name>
        <acronym>DYT35</acronym>
        <description>A form of dystonia, a disorder defined by the presence of sustained involuntary muscle contraction, often leading to abnormal postures. DYT35 is an autosomal recessive form characterized by the onset of a dystonic movement disorder in the first year of life.</description>
        <dbReference type="MIM" id="619921"/>
    </disease>
    <text>The disease is caused by variants affecting the gene represented in this entry.</text>
</comment>
<comment type="disease" evidence="7 8">
    <disease id="DI-06428">
        <name>Neurodevelopmental disorder with dystonia and seizures</name>
        <acronym>NEDDS</acronym>
        <description>An autosomal recessive disorder characterized by global developmental delay, inability to walk or speak, profoundly impaired intellectual development, and early-onset dystonia. Additional features may include other extrapyramidal movements, seizures or seizure-like activity, and cerebellar hypoplasia on brain imaging.</description>
        <dbReference type="MIM" id="619922"/>
    </disease>
    <text>The disease is caused by variants affecting the gene represented in this entry.</text>
</comment>
<comment type="similarity">
    <text evidence="10">Belongs to the SHQ1 family.</text>
</comment>
<comment type="sequence caution" evidence="10">
    <conflict type="frameshift">
        <sequence resource="EMBL-CDS" id="BAA91669"/>
    </conflict>
</comment>
<comment type="sequence caution" evidence="10">
    <conflict type="erroneous initiation">
        <sequence resource="EMBL-CDS" id="BAB14947"/>
    </conflict>
    <text>Truncated N-terminus.</text>
</comment>